<comment type="function">
    <text evidence="1">Phosphatase that hydrolyzes non-canonical purine nucleotides such as XTP and ITP to their respective diphosphate derivatives. Probably excludes non-canonical purines from DNA/RNA precursor pool, thus preventing their incorporation into DNA/RNA and avoiding chromosomal lesions.</text>
</comment>
<comment type="catalytic activity">
    <reaction evidence="1">
        <text>XTP + H2O = XDP + phosphate + H(+)</text>
        <dbReference type="Rhea" id="RHEA:28406"/>
        <dbReference type="ChEBI" id="CHEBI:15377"/>
        <dbReference type="ChEBI" id="CHEBI:15378"/>
        <dbReference type="ChEBI" id="CHEBI:43474"/>
        <dbReference type="ChEBI" id="CHEBI:59884"/>
        <dbReference type="ChEBI" id="CHEBI:61314"/>
        <dbReference type="EC" id="3.6.1.73"/>
    </reaction>
</comment>
<comment type="catalytic activity">
    <reaction evidence="1">
        <text>ITP + H2O = IDP + phosphate + H(+)</text>
        <dbReference type="Rhea" id="RHEA:28330"/>
        <dbReference type="ChEBI" id="CHEBI:15377"/>
        <dbReference type="ChEBI" id="CHEBI:15378"/>
        <dbReference type="ChEBI" id="CHEBI:43474"/>
        <dbReference type="ChEBI" id="CHEBI:58280"/>
        <dbReference type="ChEBI" id="CHEBI:61402"/>
        <dbReference type="EC" id="3.6.1.73"/>
    </reaction>
</comment>
<comment type="cofactor">
    <cofactor evidence="1">
        <name>Mg(2+)</name>
        <dbReference type="ChEBI" id="CHEBI:18420"/>
    </cofactor>
    <cofactor evidence="1">
        <name>Mn(2+)</name>
        <dbReference type="ChEBI" id="CHEBI:29035"/>
    </cofactor>
    <text evidence="1">Binds 1 divalent metal cation per subunit; can use either Mg(2+) or Mn(2+).</text>
</comment>
<comment type="subunit">
    <text evidence="1">Homodimer.</text>
</comment>
<comment type="similarity">
    <text evidence="1">Belongs to the YjjX NTPase family.</text>
</comment>
<comment type="sequence caution" evidence="2">
    <conflict type="erroneous initiation">
        <sequence resource="EMBL-CDS" id="AAB98247"/>
    </conflict>
    <text>Extended N-terminus.</text>
</comment>
<accession>Q57709</accession>
<reference key="1">
    <citation type="journal article" date="1996" name="Science">
        <title>Complete genome sequence of the methanogenic archaeon, Methanococcus jannaschii.</title>
        <authorList>
            <person name="Bult C.J."/>
            <person name="White O."/>
            <person name="Olsen G.J."/>
            <person name="Zhou L."/>
            <person name="Fleischmann R.D."/>
            <person name="Sutton G.G."/>
            <person name="Blake J.A."/>
            <person name="FitzGerald L.M."/>
            <person name="Clayton R.A."/>
            <person name="Gocayne J.D."/>
            <person name="Kerlavage A.R."/>
            <person name="Dougherty B.A."/>
            <person name="Tomb J.-F."/>
            <person name="Adams M.D."/>
            <person name="Reich C.I."/>
            <person name="Overbeek R."/>
            <person name="Kirkness E.F."/>
            <person name="Weinstock K.G."/>
            <person name="Merrick J.M."/>
            <person name="Glodek A."/>
            <person name="Scott J.L."/>
            <person name="Geoghagen N.S.M."/>
            <person name="Weidman J.F."/>
            <person name="Fuhrmann J.L."/>
            <person name="Nguyen D."/>
            <person name="Utterback T.R."/>
            <person name="Kelley J.M."/>
            <person name="Peterson J.D."/>
            <person name="Sadow P.W."/>
            <person name="Hanna M.C."/>
            <person name="Cotton M.D."/>
            <person name="Roberts K.M."/>
            <person name="Hurst M.A."/>
            <person name="Kaine B.P."/>
            <person name="Borodovsky M."/>
            <person name="Klenk H.-P."/>
            <person name="Fraser C.M."/>
            <person name="Smith H.O."/>
            <person name="Woese C.R."/>
            <person name="Venter J.C."/>
        </authorList>
    </citation>
    <scope>NUCLEOTIDE SEQUENCE [LARGE SCALE GENOMIC DNA]</scope>
    <source>
        <strain>ATCC 43067 / DSM 2661 / JAL-1 / JCM 10045 / NBRC 100440</strain>
    </source>
</reference>
<sequence>MARHKLRIVAVGSTNPVKIEAVKEGFEKVLGAVEVIGVDVISGVSSHPIGLEETYLGALNRAKNAFEKVQCTYAVGIEAGLIKVGEHYIDIHICVVFDGVNETVGLSQGFEYPKIVAEKVLEGIEGGKIAEEISGIKDIGKNIGLIGYLTDNNITRKDLCRESVIMALIPRMIKNAHLY</sequence>
<evidence type="ECO:0000255" key="1">
    <source>
        <dbReference type="HAMAP-Rule" id="MF_00648"/>
    </source>
</evidence>
<evidence type="ECO:0000305" key="2"/>
<organism>
    <name type="scientific">Methanocaldococcus jannaschii (strain ATCC 43067 / DSM 2661 / JAL-1 / JCM 10045 / NBRC 100440)</name>
    <name type="common">Methanococcus jannaschii</name>
    <dbReference type="NCBI Taxonomy" id="243232"/>
    <lineage>
        <taxon>Archaea</taxon>
        <taxon>Methanobacteriati</taxon>
        <taxon>Methanobacteriota</taxon>
        <taxon>Methanomada group</taxon>
        <taxon>Methanococci</taxon>
        <taxon>Methanococcales</taxon>
        <taxon>Methanocaldococcaceae</taxon>
        <taxon>Methanocaldococcus</taxon>
    </lineage>
</organism>
<feature type="chain" id="PRO_0000156359" description="Probable inosine/xanthosine triphosphatase">
    <location>
        <begin position="1"/>
        <end position="179"/>
    </location>
</feature>
<feature type="binding site" evidence="1">
    <location>
        <begin position="13"/>
        <end position="18"/>
    </location>
    <ligand>
        <name>substrate</name>
    </ligand>
</feature>
<feature type="binding site" evidence="1">
    <location>
        <position position="70"/>
    </location>
    <ligand>
        <name>Mg(2+)</name>
        <dbReference type="ChEBI" id="CHEBI:18420"/>
    </ligand>
</feature>
<proteinExistence type="inferred from homology"/>
<keyword id="KW-0378">Hydrolase</keyword>
<keyword id="KW-0460">Magnesium</keyword>
<keyword id="KW-0464">Manganese</keyword>
<keyword id="KW-0479">Metal-binding</keyword>
<keyword id="KW-0546">Nucleotide metabolism</keyword>
<keyword id="KW-0547">Nucleotide-binding</keyword>
<keyword id="KW-1185">Reference proteome</keyword>
<protein>
    <recommendedName>
        <fullName evidence="1">Probable inosine/xanthosine triphosphatase</fullName>
        <shortName evidence="1">ITPase/XTPase</shortName>
        <ecNumber evidence="1">3.6.1.73</ecNumber>
    </recommendedName>
    <alternativeName>
        <fullName evidence="1">Non-canonical purine NTP phosphatase</fullName>
    </alternativeName>
    <alternativeName>
        <fullName evidence="1">Non-standard purine NTP phosphatase</fullName>
    </alternativeName>
    <alternativeName>
        <fullName evidence="1">Nucleoside-triphosphate phosphatase</fullName>
        <shortName evidence="1">NTPase</shortName>
    </alternativeName>
</protein>
<name>NCPP_METJA</name>
<gene>
    <name type="ordered locus">MJ0261</name>
</gene>
<dbReference type="EC" id="3.6.1.73" evidence="1"/>
<dbReference type="EMBL" id="L77117">
    <property type="protein sequence ID" value="AAB98247.1"/>
    <property type="status" value="ALT_INIT"/>
    <property type="molecule type" value="Genomic_DNA"/>
</dbReference>
<dbReference type="PIR" id="F64332">
    <property type="entry name" value="F64332"/>
</dbReference>
<dbReference type="SMR" id="Q57709"/>
<dbReference type="FunCoup" id="Q57709">
    <property type="interactions" value="26"/>
</dbReference>
<dbReference type="STRING" id="243232.MJ_0261"/>
<dbReference type="PaxDb" id="243232-MJ_0261"/>
<dbReference type="EnsemblBacteria" id="AAB98247">
    <property type="protein sequence ID" value="AAB98247"/>
    <property type="gene ID" value="MJ_0261"/>
</dbReference>
<dbReference type="KEGG" id="mja:MJ_0261"/>
<dbReference type="eggNOG" id="arCOG01221">
    <property type="taxonomic scope" value="Archaea"/>
</dbReference>
<dbReference type="HOGENOM" id="CLU_087417_0_1_2"/>
<dbReference type="InParanoid" id="Q57709"/>
<dbReference type="PhylomeDB" id="Q57709"/>
<dbReference type="Proteomes" id="UP000000805">
    <property type="component" value="Chromosome"/>
</dbReference>
<dbReference type="GO" id="GO:0103023">
    <property type="term" value="F:ITPase activity"/>
    <property type="evidence" value="ECO:0007669"/>
    <property type="project" value="UniProtKB-EC"/>
</dbReference>
<dbReference type="GO" id="GO:0046872">
    <property type="term" value="F:metal ion binding"/>
    <property type="evidence" value="ECO:0007669"/>
    <property type="project" value="UniProtKB-KW"/>
</dbReference>
<dbReference type="GO" id="GO:0000166">
    <property type="term" value="F:nucleotide binding"/>
    <property type="evidence" value="ECO:0007669"/>
    <property type="project" value="UniProtKB-KW"/>
</dbReference>
<dbReference type="GO" id="GO:0017111">
    <property type="term" value="F:ribonucleoside triphosphate phosphatase activity"/>
    <property type="evidence" value="ECO:0000250"/>
    <property type="project" value="UniProtKB"/>
</dbReference>
<dbReference type="GO" id="GO:0009117">
    <property type="term" value="P:nucleotide metabolic process"/>
    <property type="evidence" value="ECO:0007669"/>
    <property type="project" value="UniProtKB-KW"/>
</dbReference>
<dbReference type="GO" id="GO:0006772">
    <property type="term" value="P:thiamine metabolic process"/>
    <property type="evidence" value="ECO:0000318"/>
    <property type="project" value="GO_Central"/>
</dbReference>
<dbReference type="FunFam" id="3.90.950.10:FF:000002">
    <property type="entry name" value="Inosine/xanthosine triphosphatase"/>
    <property type="match status" value="1"/>
</dbReference>
<dbReference type="Gene3D" id="3.90.950.10">
    <property type="match status" value="1"/>
</dbReference>
<dbReference type="HAMAP" id="MF_00648">
    <property type="entry name" value="Non_canon_purine_NTPase_YjjX"/>
    <property type="match status" value="1"/>
</dbReference>
<dbReference type="InterPro" id="IPR029001">
    <property type="entry name" value="ITPase-like_fam"/>
</dbReference>
<dbReference type="InterPro" id="IPR002786">
    <property type="entry name" value="Non_canon_purine_NTPase"/>
</dbReference>
<dbReference type="InterPro" id="IPR026533">
    <property type="entry name" value="NTPase/PRRC1"/>
</dbReference>
<dbReference type="InterPro" id="IPR050299">
    <property type="entry name" value="YjjX_NTPase"/>
</dbReference>
<dbReference type="NCBIfam" id="TIGR00258">
    <property type="entry name" value="inosine/xanthosine triphosphatase"/>
    <property type="match status" value="1"/>
</dbReference>
<dbReference type="PANTHER" id="PTHR34699">
    <property type="match status" value="1"/>
</dbReference>
<dbReference type="PANTHER" id="PTHR34699:SF2">
    <property type="entry name" value="NON-CANONICAL PURINE NTP PHOSPHATASE_PRRC1 DOMAIN-CONTAINING PROTEIN"/>
    <property type="match status" value="1"/>
</dbReference>
<dbReference type="Pfam" id="PF01931">
    <property type="entry name" value="NTPase_I-T"/>
    <property type="match status" value="1"/>
</dbReference>
<dbReference type="SUPFAM" id="SSF52972">
    <property type="entry name" value="ITPase-like"/>
    <property type="match status" value="1"/>
</dbReference>